<reference key="1">
    <citation type="journal article" date="2004" name="Nat. Genet.">
        <title>Evidence in the Legionella pneumophila genome for exploitation of host cell functions and high genome plasticity.</title>
        <authorList>
            <person name="Cazalet C."/>
            <person name="Rusniok C."/>
            <person name="Brueggemann H."/>
            <person name="Zidane N."/>
            <person name="Magnier A."/>
            <person name="Ma L."/>
            <person name="Tichit M."/>
            <person name="Jarraud S."/>
            <person name="Bouchier C."/>
            <person name="Vandenesch F."/>
            <person name="Kunst F."/>
            <person name="Etienne J."/>
            <person name="Glaser P."/>
            <person name="Buchrieser C."/>
        </authorList>
    </citation>
    <scope>NUCLEOTIDE SEQUENCE [LARGE SCALE GENOMIC DNA]</scope>
    <source>
        <strain>Lens</strain>
    </source>
</reference>
<gene>
    <name evidence="1" type="primary">gmk</name>
    <name type="ordered locus">lpl1987</name>
</gene>
<comment type="function">
    <text evidence="1">Essential for recycling GMP and indirectly, cGMP.</text>
</comment>
<comment type="catalytic activity">
    <reaction evidence="1">
        <text>GMP + ATP = GDP + ADP</text>
        <dbReference type="Rhea" id="RHEA:20780"/>
        <dbReference type="ChEBI" id="CHEBI:30616"/>
        <dbReference type="ChEBI" id="CHEBI:58115"/>
        <dbReference type="ChEBI" id="CHEBI:58189"/>
        <dbReference type="ChEBI" id="CHEBI:456216"/>
        <dbReference type="EC" id="2.7.4.8"/>
    </reaction>
</comment>
<comment type="subcellular location">
    <subcellularLocation>
        <location evidence="1">Cytoplasm</location>
    </subcellularLocation>
</comment>
<comment type="similarity">
    <text evidence="1">Belongs to the guanylate kinase family.</text>
</comment>
<sequence length="209" mass="23692">MVSDNSGNLYIVAAPSGGGKTSLVKKLIEMVGEIEVSVSHTTRPMRPGEKEGVDYFFIDEEQFISMVNEGAFIEHAKVFNHWYGTSVAQINKRLQFGIDVVLDIDWQGAEQIRHAYPDAVSVFIIPPSLDALKERLMNRRQDKDNVISERMTKAQDELGHYPEFDYLIVNDDFEKAAMELQSIVIANRLRIEKQANKQAKLLSFLLSSQ</sequence>
<proteinExistence type="inferred from homology"/>
<keyword id="KW-0067">ATP-binding</keyword>
<keyword id="KW-0963">Cytoplasm</keyword>
<keyword id="KW-0418">Kinase</keyword>
<keyword id="KW-0547">Nucleotide-binding</keyword>
<keyword id="KW-0808">Transferase</keyword>
<dbReference type="EC" id="2.7.4.8" evidence="1"/>
<dbReference type="EMBL" id="CR628337">
    <property type="protein sequence ID" value="CAH16227.1"/>
    <property type="molecule type" value="Genomic_DNA"/>
</dbReference>
<dbReference type="RefSeq" id="WP_011215973.1">
    <property type="nucleotide sequence ID" value="NC_006369.1"/>
</dbReference>
<dbReference type="SMR" id="Q5WV30"/>
<dbReference type="KEGG" id="lpf:lpl1987"/>
<dbReference type="LegioList" id="lpl1987"/>
<dbReference type="HOGENOM" id="CLU_001715_1_2_6"/>
<dbReference type="Proteomes" id="UP000002517">
    <property type="component" value="Chromosome"/>
</dbReference>
<dbReference type="GO" id="GO:0005829">
    <property type="term" value="C:cytosol"/>
    <property type="evidence" value="ECO:0007669"/>
    <property type="project" value="TreeGrafter"/>
</dbReference>
<dbReference type="GO" id="GO:0005524">
    <property type="term" value="F:ATP binding"/>
    <property type="evidence" value="ECO:0007669"/>
    <property type="project" value="UniProtKB-UniRule"/>
</dbReference>
<dbReference type="GO" id="GO:0004385">
    <property type="term" value="F:guanylate kinase activity"/>
    <property type="evidence" value="ECO:0007669"/>
    <property type="project" value="UniProtKB-UniRule"/>
</dbReference>
<dbReference type="CDD" id="cd00071">
    <property type="entry name" value="GMPK"/>
    <property type="match status" value="1"/>
</dbReference>
<dbReference type="FunFam" id="3.40.50.300:FF:000084">
    <property type="entry name" value="Guanylate kinase"/>
    <property type="match status" value="1"/>
</dbReference>
<dbReference type="FunFam" id="3.30.63.10:FF:000002">
    <property type="entry name" value="Guanylate kinase 1"/>
    <property type="match status" value="1"/>
</dbReference>
<dbReference type="Gene3D" id="3.30.63.10">
    <property type="entry name" value="Guanylate Kinase phosphate binding domain"/>
    <property type="match status" value="1"/>
</dbReference>
<dbReference type="Gene3D" id="3.40.50.300">
    <property type="entry name" value="P-loop containing nucleotide triphosphate hydrolases"/>
    <property type="match status" value="1"/>
</dbReference>
<dbReference type="HAMAP" id="MF_00328">
    <property type="entry name" value="Guanylate_kinase"/>
    <property type="match status" value="1"/>
</dbReference>
<dbReference type="InterPro" id="IPR008145">
    <property type="entry name" value="GK/Ca_channel_bsu"/>
</dbReference>
<dbReference type="InterPro" id="IPR008144">
    <property type="entry name" value="Guanylate_kin-like_dom"/>
</dbReference>
<dbReference type="InterPro" id="IPR017665">
    <property type="entry name" value="Guanylate_kinase"/>
</dbReference>
<dbReference type="InterPro" id="IPR020590">
    <property type="entry name" value="Guanylate_kinase_CS"/>
</dbReference>
<dbReference type="InterPro" id="IPR027417">
    <property type="entry name" value="P-loop_NTPase"/>
</dbReference>
<dbReference type="NCBIfam" id="TIGR03263">
    <property type="entry name" value="guanyl_kin"/>
    <property type="match status" value="1"/>
</dbReference>
<dbReference type="PANTHER" id="PTHR23117:SF13">
    <property type="entry name" value="GUANYLATE KINASE"/>
    <property type="match status" value="1"/>
</dbReference>
<dbReference type="PANTHER" id="PTHR23117">
    <property type="entry name" value="GUANYLATE KINASE-RELATED"/>
    <property type="match status" value="1"/>
</dbReference>
<dbReference type="Pfam" id="PF00625">
    <property type="entry name" value="Guanylate_kin"/>
    <property type="match status" value="1"/>
</dbReference>
<dbReference type="SMART" id="SM00072">
    <property type="entry name" value="GuKc"/>
    <property type="match status" value="1"/>
</dbReference>
<dbReference type="SUPFAM" id="SSF52540">
    <property type="entry name" value="P-loop containing nucleoside triphosphate hydrolases"/>
    <property type="match status" value="1"/>
</dbReference>
<dbReference type="PROSITE" id="PS00856">
    <property type="entry name" value="GUANYLATE_KINASE_1"/>
    <property type="match status" value="1"/>
</dbReference>
<dbReference type="PROSITE" id="PS50052">
    <property type="entry name" value="GUANYLATE_KINASE_2"/>
    <property type="match status" value="1"/>
</dbReference>
<protein>
    <recommendedName>
        <fullName evidence="1">Guanylate kinase</fullName>
        <ecNumber evidence="1">2.7.4.8</ecNumber>
    </recommendedName>
    <alternativeName>
        <fullName evidence="1">GMP kinase</fullName>
    </alternativeName>
</protein>
<organism>
    <name type="scientific">Legionella pneumophila (strain Lens)</name>
    <dbReference type="NCBI Taxonomy" id="297245"/>
    <lineage>
        <taxon>Bacteria</taxon>
        <taxon>Pseudomonadati</taxon>
        <taxon>Pseudomonadota</taxon>
        <taxon>Gammaproteobacteria</taxon>
        <taxon>Legionellales</taxon>
        <taxon>Legionellaceae</taxon>
        <taxon>Legionella</taxon>
    </lineage>
</organism>
<feature type="chain" id="PRO_0000170555" description="Guanylate kinase">
    <location>
        <begin position="1"/>
        <end position="209"/>
    </location>
</feature>
<feature type="domain" description="Guanylate kinase-like" evidence="1">
    <location>
        <begin position="7"/>
        <end position="185"/>
    </location>
</feature>
<feature type="binding site" evidence="1">
    <location>
        <begin position="14"/>
        <end position="21"/>
    </location>
    <ligand>
        <name>ATP</name>
        <dbReference type="ChEBI" id="CHEBI:30616"/>
    </ligand>
</feature>
<accession>Q5WV30</accession>
<evidence type="ECO:0000255" key="1">
    <source>
        <dbReference type="HAMAP-Rule" id="MF_00328"/>
    </source>
</evidence>
<name>KGUA_LEGPL</name>